<gene>
    <name type="primary">dnaK</name>
    <name type="ordered locus">Ava_0919</name>
</gene>
<dbReference type="EMBL" id="Y13044">
    <property type="protein sequence ID" value="CAA73479.1"/>
    <property type="molecule type" value="Genomic_DNA"/>
</dbReference>
<dbReference type="EMBL" id="CP000117">
    <property type="protein sequence ID" value="ABA20543.1"/>
    <property type="molecule type" value="Genomic_DNA"/>
</dbReference>
<dbReference type="SMR" id="O05714"/>
<dbReference type="STRING" id="240292.Ava_0919"/>
<dbReference type="KEGG" id="ava:Ava_0919"/>
<dbReference type="eggNOG" id="COG0443">
    <property type="taxonomic scope" value="Bacteria"/>
</dbReference>
<dbReference type="HOGENOM" id="CLU_005965_2_0_3"/>
<dbReference type="Proteomes" id="UP000002533">
    <property type="component" value="Chromosome"/>
</dbReference>
<dbReference type="GO" id="GO:0005524">
    <property type="term" value="F:ATP binding"/>
    <property type="evidence" value="ECO:0007669"/>
    <property type="project" value="UniProtKB-UniRule"/>
</dbReference>
<dbReference type="GO" id="GO:0140662">
    <property type="term" value="F:ATP-dependent protein folding chaperone"/>
    <property type="evidence" value="ECO:0007669"/>
    <property type="project" value="InterPro"/>
</dbReference>
<dbReference type="GO" id="GO:0051082">
    <property type="term" value="F:unfolded protein binding"/>
    <property type="evidence" value="ECO:0007669"/>
    <property type="project" value="InterPro"/>
</dbReference>
<dbReference type="CDD" id="cd10234">
    <property type="entry name" value="ASKHA_NBD_HSP70_DnaK-like"/>
    <property type="match status" value="1"/>
</dbReference>
<dbReference type="FunFam" id="2.60.34.10:FF:000014">
    <property type="entry name" value="Chaperone protein DnaK HSP70"/>
    <property type="match status" value="1"/>
</dbReference>
<dbReference type="FunFam" id="3.30.420.40:FF:000004">
    <property type="entry name" value="Molecular chaperone DnaK"/>
    <property type="match status" value="1"/>
</dbReference>
<dbReference type="FunFam" id="3.90.640.10:FF:000003">
    <property type="entry name" value="Molecular chaperone DnaK"/>
    <property type="match status" value="1"/>
</dbReference>
<dbReference type="Gene3D" id="3.30.420.40">
    <property type="match status" value="2"/>
</dbReference>
<dbReference type="Gene3D" id="3.90.640.10">
    <property type="entry name" value="Actin, Chain A, domain 4"/>
    <property type="match status" value="1"/>
</dbReference>
<dbReference type="Gene3D" id="2.60.34.10">
    <property type="entry name" value="Substrate Binding Domain Of DNAk, Chain A, domain 1"/>
    <property type="match status" value="1"/>
</dbReference>
<dbReference type="HAMAP" id="MF_00332">
    <property type="entry name" value="DnaK"/>
    <property type="match status" value="1"/>
</dbReference>
<dbReference type="InterPro" id="IPR043129">
    <property type="entry name" value="ATPase_NBD"/>
</dbReference>
<dbReference type="InterPro" id="IPR012725">
    <property type="entry name" value="Chaperone_DnaK"/>
</dbReference>
<dbReference type="InterPro" id="IPR018181">
    <property type="entry name" value="Heat_shock_70_CS"/>
</dbReference>
<dbReference type="InterPro" id="IPR029047">
    <property type="entry name" value="HSP70_peptide-bd_sf"/>
</dbReference>
<dbReference type="InterPro" id="IPR013126">
    <property type="entry name" value="Hsp_70_fam"/>
</dbReference>
<dbReference type="NCBIfam" id="NF001413">
    <property type="entry name" value="PRK00290.1"/>
    <property type="match status" value="1"/>
</dbReference>
<dbReference type="NCBIfam" id="NF003520">
    <property type="entry name" value="PRK05183.1"/>
    <property type="match status" value="1"/>
</dbReference>
<dbReference type="NCBIfam" id="NF009946">
    <property type="entry name" value="PRK13410.1"/>
    <property type="match status" value="1"/>
</dbReference>
<dbReference type="NCBIfam" id="TIGR02350">
    <property type="entry name" value="prok_dnaK"/>
    <property type="match status" value="1"/>
</dbReference>
<dbReference type="PANTHER" id="PTHR19375">
    <property type="entry name" value="HEAT SHOCK PROTEIN 70KDA"/>
    <property type="match status" value="1"/>
</dbReference>
<dbReference type="Pfam" id="PF00012">
    <property type="entry name" value="HSP70"/>
    <property type="match status" value="1"/>
</dbReference>
<dbReference type="PRINTS" id="PR00301">
    <property type="entry name" value="HEATSHOCK70"/>
</dbReference>
<dbReference type="SUPFAM" id="SSF53067">
    <property type="entry name" value="Actin-like ATPase domain"/>
    <property type="match status" value="2"/>
</dbReference>
<dbReference type="SUPFAM" id="SSF100920">
    <property type="entry name" value="Heat shock protein 70kD (HSP70), peptide-binding domain"/>
    <property type="match status" value="1"/>
</dbReference>
<dbReference type="PROSITE" id="PS00297">
    <property type="entry name" value="HSP70_1"/>
    <property type="match status" value="1"/>
</dbReference>
<dbReference type="PROSITE" id="PS00329">
    <property type="entry name" value="HSP70_2"/>
    <property type="match status" value="1"/>
</dbReference>
<dbReference type="PROSITE" id="PS01036">
    <property type="entry name" value="HSP70_3"/>
    <property type="match status" value="1"/>
</dbReference>
<keyword id="KW-0067">ATP-binding</keyword>
<keyword id="KW-0143">Chaperone</keyword>
<keyword id="KW-0547">Nucleotide-binding</keyword>
<keyword id="KW-0597">Phosphoprotein</keyword>
<keyword id="KW-0346">Stress response</keyword>
<evidence type="ECO:0000250" key="1"/>
<evidence type="ECO:0000256" key="2">
    <source>
        <dbReference type="SAM" id="MobiDB-lite"/>
    </source>
</evidence>
<evidence type="ECO:0000305" key="3"/>
<sequence>MGKVVGIDLGTTNSVVAVMEGGKPVVIANAEGMRTTPSVVGFSKDGERVVGQMARRQTVLNPQNTFFAVKRYIGRRYNELSPESKRVPYTIRKDDVGNIKVACPRLNKEFAAEEISAMVLKKLADDASAYLGAAVTGAVITVPAYFNDSQRQATRDAGRIAGLEVLRILNEPTAASLAYGLDRGDTETILVFDLGGGTFDVSILEVGDGVFEVKATSGDTQLGGNDFDKKIVDWLAEQFLETEGVDLRRDRQALQRLMEAAEKAKIELSAVSITDINLPFITATEDGPKHLETRLTRSQFEGLCADLLGRVRNPVKRALKDAGLRPDDIEEVVLVGGSTRMPMVKQLVRDLIGIEPSENVNPDEVVAMGAAIQAGILAGEFKDVLLLDVTPLSLGLEAIGGVMKKLIPRNTTIPVRRSDIFSTSENNQNSVEIHVVQGEREMAGDNKSLGRFKLYGIPPAPRGIPQIQVAFDIDANGILQVTALDRTTGREQSITIQGASTLSESEVNRMIQEAQKYADVDRERKERVEKRTRSEALILQGERQLREVALEFGMQFARNRRQRIDNISRELKESLKENDDRGIDQAYADLQDALYELNREVRQYYAEDEDDDLFATIKDIFVGDKDKERDLPRDSYRERDSYNNRDYGRDYGRDYGRDSRPSYDSNRPPRKSPRPSYQDNWDDDDDWL</sequence>
<reference key="1">
    <citation type="online journal article" date="1997" name="Plant Gene Register">
        <title>Nucleotide sequence of the dnaK-gene from the heterocyst-forming cyanobacterium Anabaena variabilis ATCC 29413.</title>
        <authorList>
            <person name="Pohl B."/>
            <person name="Masepohl B."/>
            <person name="Spieker R.L."/>
            <person name="Boehme H."/>
        </authorList>
        <locator>PGR97-097</locator>
    </citation>
    <scope>NUCLEOTIDE SEQUENCE [GENOMIC DNA]</scope>
</reference>
<reference key="2">
    <citation type="journal article" date="2014" name="Stand. Genomic Sci.">
        <title>Complete genome sequence of Anabaena variabilis ATCC 29413.</title>
        <authorList>
            <person name="Thiel T."/>
            <person name="Pratte B.S."/>
            <person name="Zhong J."/>
            <person name="Goodwin L."/>
            <person name="Copeland A."/>
            <person name="Lucas S."/>
            <person name="Han C."/>
            <person name="Pitluck S."/>
            <person name="Land M.L."/>
            <person name="Kyrpides N.C."/>
            <person name="Woyke T."/>
        </authorList>
    </citation>
    <scope>NUCLEOTIDE SEQUENCE [LARGE SCALE GENOMIC DNA]</scope>
    <source>
        <strain>ATCC 29413 / PCC 7937</strain>
    </source>
</reference>
<organism>
    <name type="scientific">Trichormus variabilis (strain ATCC 29413 / PCC 7937)</name>
    <name type="common">Anabaena variabilis</name>
    <dbReference type="NCBI Taxonomy" id="240292"/>
    <lineage>
        <taxon>Bacteria</taxon>
        <taxon>Bacillati</taxon>
        <taxon>Cyanobacteriota</taxon>
        <taxon>Cyanophyceae</taxon>
        <taxon>Nostocales</taxon>
        <taxon>Nostocaceae</taxon>
        <taxon>Trichormus</taxon>
    </lineage>
</organism>
<feature type="chain" id="PRO_0000078410" description="Chaperone protein DnaK">
    <location>
        <begin position="1"/>
        <end position="688"/>
    </location>
</feature>
<feature type="region of interest" description="Disordered" evidence="2">
    <location>
        <begin position="630"/>
        <end position="688"/>
    </location>
</feature>
<feature type="compositionally biased region" description="Basic and acidic residues" evidence="2">
    <location>
        <begin position="630"/>
        <end position="661"/>
    </location>
</feature>
<feature type="modified residue" description="Phosphothreonine; by autocatalysis" evidence="1">
    <location>
        <position position="198"/>
    </location>
</feature>
<proteinExistence type="inferred from homology"/>
<name>DNAK_TRIV2</name>
<accession>O05714</accession>
<accession>Q3MEP3</accession>
<comment type="function">
    <text evidence="1">Acts as a chaperone.</text>
</comment>
<comment type="induction">
    <text evidence="1">By stress conditions e.g. heat shock (By similarity).</text>
</comment>
<comment type="similarity">
    <text evidence="3">Belongs to the heat shock protein 70 family.</text>
</comment>
<protein>
    <recommendedName>
        <fullName>Chaperone protein DnaK</fullName>
    </recommendedName>
    <alternativeName>
        <fullName>HSP70</fullName>
    </alternativeName>
    <alternativeName>
        <fullName>Heat shock 70 kDa protein</fullName>
    </alternativeName>
    <alternativeName>
        <fullName>Heat shock protein 70</fullName>
    </alternativeName>
</protein>